<sequence>MPTINQLVRKPRKSKVEKSKSPALNVGYNSHKKVQTNVSSPQKRGVATRVGTMTPKKPNSALRKFARVRLSNLIEVTAYIPGIGHNLQEHSVVLLRGGRVKDLPGVRYHIVRGALDTAGVNDRKQGRSKYGTKRPKA</sequence>
<comment type="function">
    <text evidence="1">With S4 and S5 plays an important role in translational accuracy.</text>
</comment>
<comment type="function">
    <text evidence="1">Interacts with and stabilizes bases of the 16S rRNA that are involved in tRNA selection in the A site and with the mRNA backbone. Located at the interface of the 30S and 50S subunits, it traverses the body of the 30S subunit contacting proteins on the other side and probably holding the rRNA structure together. The combined cluster of proteins S8, S12 and S17 appears to hold together the shoulder and platform of the 30S subunit.</text>
</comment>
<comment type="subunit">
    <text evidence="1">Part of the 30S ribosomal subunit. Contacts proteins S8 and S17. May interact with IF1 in the 30S initiation complex.</text>
</comment>
<comment type="similarity">
    <text evidence="1">Belongs to the universal ribosomal protein uS12 family.</text>
</comment>
<comment type="caution">
    <text evidence="3">Because the enzyme that would modify Asp-102 to 3-methylthioaspartic acid has not been found in the proteome of this organism, that modification is not predicted.</text>
</comment>
<reference key="1">
    <citation type="journal article" date="1992" name="Nucleic Acids Res.">
        <title>The high level streptomycin resistance gene from Streptococcus pneumoniae is a homologue of the ribosomal protein S12 gene from Escherichia coli.</title>
        <authorList>
            <person name="Salles C."/>
            <person name="Creancier L."/>
            <person name="Claverys J.-P."/>
            <person name="Mejean V."/>
        </authorList>
    </citation>
    <scope>NUCLEOTIDE SEQUENCE [GENOMIC DNA]</scope>
    <source>
        <strain>R6 / R800</strain>
    </source>
</reference>
<reference key="2">
    <citation type="journal article" date="2001" name="Science">
        <title>Complete genome sequence of a virulent isolate of Streptococcus pneumoniae.</title>
        <authorList>
            <person name="Tettelin H."/>
            <person name="Nelson K.E."/>
            <person name="Paulsen I.T."/>
            <person name="Eisen J.A."/>
            <person name="Read T.D."/>
            <person name="Peterson S.N."/>
            <person name="Heidelberg J.F."/>
            <person name="DeBoy R.T."/>
            <person name="Haft D.H."/>
            <person name="Dodson R.J."/>
            <person name="Durkin A.S."/>
            <person name="Gwinn M.L."/>
            <person name="Kolonay J.F."/>
            <person name="Nelson W.C."/>
            <person name="Peterson J.D."/>
            <person name="Umayam L.A."/>
            <person name="White O."/>
            <person name="Salzberg S.L."/>
            <person name="Lewis M.R."/>
            <person name="Radune D."/>
            <person name="Holtzapple E.K."/>
            <person name="Khouri H.M."/>
            <person name="Wolf A.M."/>
            <person name="Utterback T.R."/>
            <person name="Hansen C.L."/>
            <person name="McDonald L.A."/>
            <person name="Feldblyum T.V."/>
            <person name="Angiuoli S.V."/>
            <person name="Dickinson T."/>
            <person name="Hickey E.K."/>
            <person name="Holt I.E."/>
            <person name="Loftus B.J."/>
            <person name="Yang F."/>
            <person name="Smith H.O."/>
            <person name="Venter J.C."/>
            <person name="Dougherty B.A."/>
            <person name="Morrison D.A."/>
            <person name="Hollingshead S.K."/>
            <person name="Fraser C.M."/>
        </authorList>
    </citation>
    <scope>NUCLEOTIDE SEQUENCE [LARGE SCALE GENOMIC DNA]</scope>
    <source>
        <strain>ATCC BAA-334 / TIGR4</strain>
    </source>
</reference>
<proteinExistence type="inferred from homology"/>
<name>RS12_STRPN</name>
<evidence type="ECO:0000255" key="1">
    <source>
        <dbReference type="HAMAP-Rule" id="MF_00403"/>
    </source>
</evidence>
<evidence type="ECO:0000256" key="2">
    <source>
        <dbReference type="SAM" id="MobiDB-lite"/>
    </source>
</evidence>
<evidence type="ECO:0000305" key="3"/>
<keyword id="KW-1185">Reference proteome</keyword>
<keyword id="KW-0687">Ribonucleoprotein</keyword>
<keyword id="KW-0689">Ribosomal protein</keyword>
<keyword id="KW-0694">RNA-binding</keyword>
<keyword id="KW-0699">rRNA-binding</keyword>
<keyword id="KW-0820">tRNA-binding</keyword>
<gene>
    <name evidence="1" type="primary">rpsL</name>
    <name type="synonym">str</name>
    <name type="ordered locus">SP_0271</name>
</gene>
<protein>
    <recommendedName>
        <fullName evidence="1">Small ribosomal subunit protein uS12</fullName>
    </recommendedName>
    <alternativeName>
        <fullName evidence="3">30S ribosomal protein S12</fullName>
    </alternativeName>
</protein>
<accession>P0A4A7</accession>
<accession>P30891</accession>
<organism>
    <name type="scientific">Streptococcus pneumoniae serotype 4 (strain ATCC BAA-334 / TIGR4)</name>
    <dbReference type="NCBI Taxonomy" id="170187"/>
    <lineage>
        <taxon>Bacteria</taxon>
        <taxon>Bacillati</taxon>
        <taxon>Bacillota</taxon>
        <taxon>Bacilli</taxon>
        <taxon>Lactobacillales</taxon>
        <taxon>Streptococcaceae</taxon>
        <taxon>Streptococcus</taxon>
    </lineage>
</organism>
<feature type="chain" id="PRO_0000146325" description="Small ribosomal subunit protein uS12">
    <location>
        <begin position="1"/>
        <end position="137"/>
    </location>
</feature>
<feature type="region of interest" description="Disordered" evidence="2">
    <location>
        <begin position="1"/>
        <end position="57"/>
    </location>
</feature>
<feature type="sequence variant" description="In STR41 mutation, high level of resistance to streptomycin.">
    <original>K</original>
    <variation>T</variation>
    <location>
        <position position="56"/>
    </location>
</feature>
<dbReference type="EMBL" id="Z15120">
    <property type="protein sequence ID" value="CAA78825.1"/>
    <property type="molecule type" value="Genomic_DNA"/>
</dbReference>
<dbReference type="EMBL" id="AE005672">
    <property type="protein sequence ID" value="AAK74449.1"/>
    <property type="molecule type" value="Genomic_DNA"/>
</dbReference>
<dbReference type="PIR" id="H95031">
    <property type="entry name" value="H95031"/>
</dbReference>
<dbReference type="PIR" id="S26680">
    <property type="entry name" value="S26680"/>
</dbReference>
<dbReference type="RefSeq" id="WP_001142332.1">
    <property type="nucleotide sequence ID" value="NZ_CP155539.1"/>
</dbReference>
<dbReference type="SMR" id="P0A4A7"/>
<dbReference type="PaxDb" id="170187-SP_0271"/>
<dbReference type="EnsemblBacteria" id="AAK74449">
    <property type="protein sequence ID" value="AAK74449"/>
    <property type="gene ID" value="SP_0271"/>
</dbReference>
<dbReference type="GeneID" id="93922571"/>
<dbReference type="KEGG" id="spn:SP_0271"/>
<dbReference type="eggNOG" id="COG0048">
    <property type="taxonomic scope" value="Bacteria"/>
</dbReference>
<dbReference type="PhylomeDB" id="P0A4A7"/>
<dbReference type="BioCyc" id="SPNE170187:G1FZB-277-MONOMER"/>
<dbReference type="Proteomes" id="UP000000585">
    <property type="component" value="Chromosome"/>
</dbReference>
<dbReference type="GO" id="GO:0015935">
    <property type="term" value="C:small ribosomal subunit"/>
    <property type="evidence" value="ECO:0007669"/>
    <property type="project" value="InterPro"/>
</dbReference>
<dbReference type="GO" id="GO:0019843">
    <property type="term" value="F:rRNA binding"/>
    <property type="evidence" value="ECO:0007669"/>
    <property type="project" value="UniProtKB-UniRule"/>
</dbReference>
<dbReference type="GO" id="GO:0003735">
    <property type="term" value="F:structural constituent of ribosome"/>
    <property type="evidence" value="ECO:0007669"/>
    <property type="project" value="InterPro"/>
</dbReference>
<dbReference type="GO" id="GO:0000049">
    <property type="term" value="F:tRNA binding"/>
    <property type="evidence" value="ECO:0007669"/>
    <property type="project" value="UniProtKB-UniRule"/>
</dbReference>
<dbReference type="GO" id="GO:0006412">
    <property type="term" value="P:translation"/>
    <property type="evidence" value="ECO:0007669"/>
    <property type="project" value="UniProtKB-UniRule"/>
</dbReference>
<dbReference type="CDD" id="cd03368">
    <property type="entry name" value="Ribosomal_S12"/>
    <property type="match status" value="1"/>
</dbReference>
<dbReference type="FunFam" id="2.40.50.140:FF:000001">
    <property type="entry name" value="30S ribosomal protein S12"/>
    <property type="match status" value="1"/>
</dbReference>
<dbReference type="Gene3D" id="2.40.50.140">
    <property type="entry name" value="Nucleic acid-binding proteins"/>
    <property type="match status" value="1"/>
</dbReference>
<dbReference type="HAMAP" id="MF_00403_B">
    <property type="entry name" value="Ribosomal_uS12_B"/>
    <property type="match status" value="1"/>
</dbReference>
<dbReference type="InterPro" id="IPR012340">
    <property type="entry name" value="NA-bd_OB-fold"/>
</dbReference>
<dbReference type="InterPro" id="IPR006032">
    <property type="entry name" value="Ribosomal_uS12"/>
</dbReference>
<dbReference type="InterPro" id="IPR005679">
    <property type="entry name" value="Ribosomal_uS12_bac"/>
</dbReference>
<dbReference type="NCBIfam" id="TIGR00981">
    <property type="entry name" value="rpsL_bact"/>
    <property type="match status" value="1"/>
</dbReference>
<dbReference type="PANTHER" id="PTHR11652">
    <property type="entry name" value="30S RIBOSOMAL PROTEIN S12 FAMILY MEMBER"/>
    <property type="match status" value="1"/>
</dbReference>
<dbReference type="Pfam" id="PF00164">
    <property type="entry name" value="Ribosom_S12_S23"/>
    <property type="match status" value="1"/>
</dbReference>
<dbReference type="PIRSF" id="PIRSF002133">
    <property type="entry name" value="Ribosomal_S12/S23"/>
    <property type="match status" value="1"/>
</dbReference>
<dbReference type="PRINTS" id="PR01034">
    <property type="entry name" value="RIBOSOMALS12"/>
</dbReference>
<dbReference type="SUPFAM" id="SSF50249">
    <property type="entry name" value="Nucleic acid-binding proteins"/>
    <property type="match status" value="1"/>
</dbReference>
<dbReference type="PROSITE" id="PS00055">
    <property type="entry name" value="RIBOSOMAL_S12"/>
    <property type="match status" value="1"/>
</dbReference>